<comment type="similarity">
    <text evidence="1">Belongs to the UPF0102 family.</text>
</comment>
<accession>Q9PFV3</accession>
<sequence>MLNRRECGAAVEVAARRHLERAGLRWLASNVCFRGGELDLVMYDVMSVVFVEVRYRQQENHGSAAQSVDRRKRRKLVMAAQLFLQRHPFLAQVPCRFDVVEGAGRPLQLHWIRDAFRLDDC</sequence>
<feature type="chain" id="PRO_0000167394" description="UPF0102 protein XF_0554">
    <location>
        <begin position="1"/>
        <end position="121"/>
    </location>
</feature>
<name>Y554_XYLFA</name>
<protein>
    <recommendedName>
        <fullName>UPF0102 protein XF_0554</fullName>
    </recommendedName>
</protein>
<proteinExistence type="inferred from homology"/>
<reference key="1">
    <citation type="journal article" date="2000" name="Nature">
        <title>The genome sequence of the plant pathogen Xylella fastidiosa.</title>
        <authorList>
            <person name="Simpson A.J.G."/>
            <person name="Reinach F.C."/>
            <person name="Arruda P."/>
            <person name="Abreu F.A."/>
            <person name="Acencio M."/>
            <person name="Alvarenga R."/>
            <person name="Alves L.M.C."/>
            <person name="Araya J.E."/>
            <person name="Baia G.S."/>
            <person name="Baptista C.S."/>
            <person name="Barros M.H."/>
            <person name="Bonaccorsi E.D."/>
            <person name="Bordin S."/>
            <person name="Bove J.M."/>
            <person name="Briones M.R.S."/>
            <person name="Bueno M.R.P."/>
            <person name="Camargo A.A."/>
            <person name="Camargo L.E.A."/>
            <person name="Carraro D.M."/>
            <person name="Carrer H."/>
            <person name="Colauto N.B."/>
            <person name="Colombo C."/>
            <person name="Costa F.F."/>
            <person name="Costa M.C.R."/>
            <person name="Costa-Neto C.M."/>
            <person name="Coutinho L.L."/>
            <person name="Cristofani M."/>
            <person name="Dias-Neto E."/>
            <person name="Docena C."/>
            <person name="El-Dorry H."/>
            <person name="Facincani A.P."/>
            <person name="Ferreira A.J.S."/>
            <person name="Ferreira V.C.A."/>
            <person name="Ferro J.A."/>
            <person name="Fraga J.S."/>
            <person name="Franca S.C."/>
            <person name="Franco M.C."/>
            <person name="Frohme M."/>
            <person name="Furlan L.R."/>
            <person name="Garnier M."/>
            <person name="Goldman G.H."/>
            <person name="Goldman M.H.S."/>
            <person name="Gomes S.L."/>
            <person name="Gruber A."/>
            <person name="Ho P.L."/>
            <person name="Hoheisel J.D."/>
            <person name="Junqueira M.L."/>
            <person name="Kemper E.L."/>
            <person name="Kitajima J.P."/>
            <person name="Krieger J.E."/>
            <person name="Kuramae E.E."/>
            <person name="Laigret F."/>
            <person name="Lambais M.R."/>
            <person name="Leite L.C.C."/>
            <person name="Lemos E.G.M."/>
            <person name="Lemos M.V.F."/>
            <person name="Lopes S.A."/>
            <person name="Lopes C.R."/>
            <person name="Machado J.A."/>
            <person name="Machado M.A."/>
            <person name="Madeira A.M.B.N."/>
            <person name="Madeira H.M.F."/>
            <person name="Marino C.L."/>
            <person name="Marques M.V."/>
            <person name="Martins E.A.L."/>
            <person name="Martins E.M.F."/>
            <person name="Matsukuma A.Y."/>
            <person name="Menck C.F.M."/>
            <person name="Miracca E.C."/>
            <person name="Miyaki C.Y."/>
            <person name="Monteiro-Vitorello C.B."/>
            <person name="Moon D.H."/>
            <person name="Nagai M.A."/>
            <person name="Nascimento A.L.T.O."/>
            <person name="Netto L.E.S."/>
            <person name="Nhani A. Jr."/>
            <person name="Nobrega F.G."/>
            <person name="Nunes L.R."/>
            <person name="Oliveira M.A."/>
            <person name="de Oliveira M.C."/>
            <person name="de Oliveira R.C."/>
            <person name="Palmieri D.A."/>
            <person name="Paris A."/>
            <person name="Peixoto B.R."/>
            <person name="Pereira G.A.G."/>
            <person name="Pereira H.A. Jr."/>
            <person name="Pesquero J.B."/>
            <person name="Quaggio R.B."/>
            <person name="Roberto P.G."/>
            <person name="Rodrigues V."/>
            <person name="de Rosa A.J.M."/>
            <person name="de Rosa V.E. Jr."/>
            <person name="de Sa R.G."/>
            <person name="Santelli R.V."/>
            <person name="Sawasaki H.E."/>
            <person name="da Silva A.C.R."/>
            <person name="da Silva A.M."/>
            <person name="da Silva F.R."/>
            <person name="Silva W.A. Jr."/>
            <person name="da Silveira J.F."/>
            <person name="Silvestri M.L.Z."/>
            <person name="Siqueira W.J."/>
            <person name="de Souza A.A."/>
            <person name="de Souza A.P."/>
            <person name="Terenzi M.F."/>
            <person name="Truffi D."/>
            <person name="Tsai S.M."/>
            <person name="Tsuhako M.H."/>
            <person name="Vallada H."/>
            <person name="Van Sluys M.A."/>
            <person name="Verjovski-Almeida S."/>
            <person name="Vettore A.L."/>
            <person name="Zago M.A."/>
            <person name="Zatz M."/>
            <person name="Meidanis J."/>
            <person name="Setubal J.C."/>
        </authorList>
    </citation>
    <scope>NUCLEOTIDE SEQUENCE [LARGE SCALE GENOMIC DNA]</scope>
    <source>
        <strain>9a5c</strain>
    </source>
</reference>
<organism>
    <name type="scientific">Xylella fastidiosa (strain 9a5c)</name>
    <dbReference type="NCBI Taxonomy" id="160492"/>
    <lineage>
        <taxon>Bacteria</taxon>
        <taxon>Pseudomonadati</taxon>
        <taxon>Pseudomonadota</taxon>
        <taxon>Gammaproteobacteria</taxon>
        <taxon>Lysobacterales</taxon>
        <taxon>Lysobacteraceae</taxon>
        <taxon>Xylella</taxon>
    </lineage>
</organism>
<evidence type="ECO:0000305" key="1"/>
<dbReference type="EMBL" id="AE003849">
    <property type="protein sequence ID" value="AAF83364.1"/>
    <property type="molecule type" value="Genomic_DNA"/>
</dbReference>
<dbReference type="PIR" id="H82792">
    <property type="entry name" value="H82792"/>
</dbReference>
<dbReference type="RefSeq" id="WP_010893080.1">
    <property type="nucleotide sequence ID" value="NC_002488.3"/>
</dbReference>
<dbReference type="SMR" id="Q9PFV3"/>
<dbReference type="STRING" id="160492.XF_0554"/>
<dbReference type="KEGG" id="xfa:XF_0554"/>
<dbReference type="eggNOG" id="COG0792">
    <property type="taxonomic scope" value="Bacteria"/>
</dbReference>
<dbReference type="HOGENOM" id="CLU_115353_1_0_6"/>
<dbReference type="Proteomes" id="UP000000812">
    <property type="component" value="Chromosome"/>
</dbReference>
<dbReference type="GO" id="GO:0003676">
    <property type="term" value="F:nucleic acid binding"/>
    <property type="evidence" value="ECO:0007669"/>
    <property type="project" value="InterPro"/>
</dbReference>
<dbReference type="Gene3D" id="3.40.1350.10">
    <property type="match status" value="1"/>
</dbReference>
<dbReference type="HAMAP" id="MF_00048">
    <property type="entry name" value="UPF0102"/>
    <property type="match status" value="1"/>
</dbReference>
<dbReference type="InterPro" id="IPR011335">
    <property type="entry name" value="Restrct_endonuc-II-like"/>
</dbReference>
<dbReference type="InterPro" id="IPR011856">
    <property type="entry name" value="tRNA_endonuc-like_dom_sf"/>
</dbReference>
<dbReference type="InterPro" id="IPR003509">
    <property type="entry name" value="UPF0102_YraN-like"/>
</dbReference>
<dbReference type="NCBIfam" id="NF009150">
    <property type="entry name" value="PRK12497.1-3"/>
    <property type="match status" value="1"/>
</dbReference>
<dbReference type="NCBIfam" id="TIGR00252">
    <property type="entry name" value="YraN family protein"/>
    <property type="match status" value="1"/>
</dbReference>
<dbReference type="PANTHER" id="PTHR34039">
    <property type="entry name" value="UPF0102 PROTEIN YRAN"/>
    <property type="match status" value="1"/>
</dbReference>
<dbReference type="PANTHER" id="PTHR34039:SF1">
    <property type="entry name" value="UPF0102 PROTEIN YRAN"/>
    <property type="match status" value="1"/>
</dbReference>
<dbReference type="Pfam" id="PF02021">
    <property type="entry name" value="UPF0102"/>
    <property type="match status" value="1"/>
</dbReference>
<dbReference type="SUPFAM" id="SSF52980">
    <property type="entry name" value="Restriction endonuclease-like"/>
    <property type="match status" value="1"/>
</dbReference>
<gene>
    <name type="ordered locus">XF_0554</name>
</gene>